<comment type="catalytic activity">
    <reaction evidence="1">
        <text>D-arabinose 5-phosphate + phosphoenolpyruvate + H2O = 3-deoxy-alpha-D-manno-2-octulosonate-8-phosphate + phosphate</text>
        <dbReference type="Rhea" id="RHEA:14053"/>
        <dbReference type="ChEBI" id="CHEBI:15377"/>
        <dbReference type="ChEBI" id="CHEBI:43474"/>
        <dbReference type="ChEBI" id="CHEBI:57693"/>
        <dbReference type="ChEBI" id="CHEBI:58702"/>
        <dbReference type="ChEBI" id="CHEBI:85985"/>
        <dbReference type="EC" id="2.5.1.55"/>
    </reaction>
</comment>
<comment type="pathway">
    <text evidence="1">Carbohydrate biosynthesis; 3-deoxy-D-manno-octulosonate biosynthesis; 3-deoxy-D-manno-octulosonate from D-ribulose 5-phosphate: step 2/3.</text>
</comment>
<comment type="pathway">
    <text evidence="1">Bacterial outer membrane biogenesis; lipopolysaccharide biosynthesis.</text>
</comment>
<comment type="subcellular location">
    <subcellularLocation>
        <location evidence="1">Cytoplasm</location>
    </subcellularLocation>
</comment>
<comment type="similarity">
    <text evidence="1">Belongs to the KdsA family.</text>
</comment>
<gene>
    <name evidence="1" type="primary">kdsA</name>
    <name type="ordered locus">VSAL_I0794</name>
</gene>
<proteinExistence type="inferred from homology"/>
<name>KDSA_ALISL</name>
<dbReference type="EC" id="2.5.1.55" evidence="1"/>
<dbReference type="EMBL" id="FM178379">
    <property type="protein sequence ID" value="CAQ78479.1"/>
    <property type="molecule type" value="Genomic_DNA"/>
</dbReference>
<dbReference type="RefSeq" id="WP_012549587.1">
    <property type="nucleotide sequence ID" value="NC_011312.1"/>
</dbReference>
<dbReference type="SMR" id="B6EHH9"/>
<dbReference type="KEGG" id="vsa:VSAL_I0794"/>
<dbReference type="eggNOG" id="COG2877">
    <property type="taxonomic scope" value="Bacteria"/>
</dbReference>
<dbReference type="HOGENOM" id="CLU_036666_0_0_6"/>
<dbReference type="UniPathway" id="UPA00030"/>
<dbReference type="UniPathway" id="UPA00357">
    <property type="reaction ID" value="UER00474"/>
</dbReference>
<dbReference type="Proteomes" id="UP000001730">
    <property type="component" value="Chromosome 1"/>
</dbReference>
<dbReference type="GO" id="GO:0005737">
    <property type="term" value="C:cytoplasm"/>
    <property type="evidence" value="ECO:0007669"/>
    <property type="project" value="UniProtKB-SubCell"/>
</dbReference>
<dbReference type="GO" id="GO:0008676">
    <property type="term" value="F:3-deoxy-8-phosphooctulonate synthase activity"/>
    <property type="evidence" value="ECO:0007669"/>
    <property type="project" value="UniProtKB-UniRule"/>
</dbReference>
<dbReference type="GO" id="GO:0019294">
    <property type="term" value="P:keto-3-deoxy-D-manno-octulosonic acid biosynthetic process"/>
    <property type="evidence" value="ECO:0007669"/>
    <property type="project" value="UniProtKB-UniRule"/>
</dbReference>
<dbReference type="FunFam" id="3.20.20.70:FF:000058">
    <property type="entry name" value="2-dehydro-3-deoxyphosphooctonate aldolase"/>
    <property type="match status" value="1"/>
</dbReference>
<dbReference type="Gene3D" id="3.20.20.70">
    <property type="entry name" value="Aldolase class I"/>
    <property type="match status" value="1"/>
</dbReference>
<dbReference type="HAMAP" id="MF_00056">
    <property type="entry name" value="KDO8P_synth"/>
    <property type="match status" value="1"/>
</dbReference>
<dbReference type="InterPro" id="IPR013785">
    <property type="entry name" value="Aldolase_TIM"/>
</dbReference>
<dbReference type="InterPro" id="IPR006218">
    <property type="entry name" value="DAHP1/KDSA"/>
</dbReference>
<dbReference type="InterPro" id="IPR006269">
    <property type="entry name" value="KDO8P_synthase"/>
</dbReference>
<dbReference type="NCBIfam" id="TIGR01362">
    <property type="entry name" value="KDO8P_synth"/>
    <property type="match status" value="1"/>
</dbReference>
<dbReference type="NCBIfam" id="NF003543">
    <property type="entry name" value="PRK05198.1"/>
    <property type="match status" value="1"/>
</dbReference>
<dbReference type="NCBIfam" id="NF009109">
    <property type="entry name" value="PRK12457.1"/>
    <property type="match status" value="1"/>
</dbReference>
<dbReference type="PANTHER" id="PTHR21057">
    <property type="entry name" value="PHOSPHO-2-DEHYDRO-3-DEOXYHEPTONATE ALDOLASE"/>
    <property type="match status" value="1"/>
</dbReference>
<dbReference type="Pfam" id="PF00793">
    <property type="entry name" value="DAHP_synth_1"/>
    <property type="match status" value="1"/>
</dbReference>
<dbReference type="SUPFAM" id="SSF51569">
    <property type="entry name" value="Aldolase"/>
    <property type="match status" value="1"/>
</dbReference>
<evidence type="ECO:0000255" key="1">
    <source>
        <dbReference type="HAMAP-Rule" id="MF_00056"/>
    </source>
</evidence>
<accession>B6EHH9</accession>
<sequence length="284" mass="31078">MQNQKTVKIGNIDVANDKPFTLFAGMNVLESRDLAMRMCETYVEITDRLGIPYVFKASFDKANRSSVHSYRGPGMEEGLKIFQELKDTFGVKIITDIHTEAQAQPVADVVDVIQLPAFLARQTDLVETMARTGAVINVKKPQFMSPDQVGNIVDKFAECGNENIILCERGSCMGYDNLVVDMLGFGVMKKVSNGSPIIFDVTHSLQNRDPSGKASGGRRSQTVELAKAGLATGIAGLFIEAHPTPDKALCDGPSALPLDQLEPFLKQMKALDDLIKGFEHIDIK</sequence>
<feature type="chain" id="PRO_1000091797" description="2-dehydro-3-deoxyphosphooctonate aldolase">
    <location>
        <begin position="1"/>
        <end position="284"/>
    </location>
</feature>
<protein>
    <recommendedName>
        <fullName evidence="1">2-dehydro-3-deoxyphosphooctonate aldolase</fullName>
        <ecNumber evidence="1">2.5.1.55</ecNumber>
    </recommendedName>
    <alternativeName>
        <fullName evidence="1">3-deoxy-D-manno-octulosonic acid 8-phosphate synthase</fullName>
    </alternativeName>
    <alternativeName>
        <fullName evidence="1">KDO-8-phosphate synthase</fullName>
        <shortName evidence="1">KDO 8-P synthase</shortName>
        <shortName evidence="1">KDOPS</shortName>
    </alternativeName>
    <alternativeName>
        <fullName evidence="1">Phospho-2-dehydro-3-deoxyoctonate aldolase</fullName>
    </alternativeName>
</protein>
<reference key="1">
    <citation type="journal article" date="2008" name="BMC Genomics">
        <title>The genome sequence of the fish pathogen Aliivibrio salmonicida strain LFI1238 shows extensive evidence of gene decay.</title>
        <authorList>
            <person name="Hjerde E."/>
            <person name="Lorentzen M.S."/>
            <person name="Holden M.T."/>
            <person name="Seeger K."/>
            <person name="Paulsen S."/>
            <person name="Bason N."/>
            <person name="Churcher C."/>
            <person name="Harris D."/>
            <person name="Norbertczak H."/>
            <person name="Quail M.A."/>
            <person name="Sanders S."/>
            <person name="Thurston S."/>
            <person name="Parkhill J."/>
            <person name="Willassen N.P."/>
            <person name="Thomson N.R."/>
        </authorList>
    </citation>
    <scope>NUCLEOTIDE SEQUENCE [LARGE SCALE GENOMIC DNA]</scope>
    <source>
        <strain>LFI1238</strain>
    </source>
</reference>
<keyword id="KW-0963">Cytoplasm</keyword>
<keyword id="KW-0448">Lipopolysaccharide biosynthesis</keyword>
<keyword id="KW-0808">Transferase</keyword>
<organism>
    <name type="scientific">Aliivibrio salmonicida (strain LFI1238)</name>
    <name type="common">Vibrio salmonicida (strain LFI1238)</name>
    <dbReference type="NCBI Taxonomy" id="316275"/>
    <lineage>
        <taxon>Bacteria</taxon>
        <taxon>Pseudomonadati</taxon>
        <taxon>Pseudomonadota</taxon>
        <taxon>Gammaproteobacteria</taxon>
        <taxon>Vibrionales</taxon>
        <taxon>Vibrionaceae</taxon>
        <taxon>Aliivibrio</taxon>
    </lineage>
</organism>